<reference key="1">
    <citation type="journal article" date="2008" name="BMC Microbiol.">
        <title>Complete genome sequence of Treponema pallidum ssp. pallidum strain SS14 determined with oligonucleotide arrays.</title>
        <authorList>
            <person name="Matejkova P."/>
            <person name="Strouhal M."/>
            <person name="Smajs D."/>
            <person name="Norris S.J."/>
            <person name="Palzkill T."/>
            <person name="Petrosino J.F."/>
            <person name="Sodergren E."/>
            <person name="Norton J.E."/>
            <person name="Singh J."/>
            <person name="Richmond T.A."/>
            <person name="Molla M.N."/>
            <person name="Albert T.J."/>
            <person name="Weinstock G.M."/>
        </authorList>
    </citation>
    <scope>NUCLEOTIDE SEQUENCE [LARGE SCALE GENOMIC DNA]</scope>
    <source>
        <strain>SS14</strain>
    </source>
</reference>
<evidence type="ECO:0000255" key="1">
    <source>
        <dbReference type="HAMAP-Rule" id="MF_00373"/>
    </source>
</evidence>
<evidence type="ECO:0000305" key="2"/>
<protein>
    <recommendedName>
        <fullName evidence="1">Large ribosomal subunit protein bL28</fullName>
    </recommendedName>
    <alternativeName>
        <fullName evidence="2">50S ribosomal protein L28</fullName>
    </alternativeName>
</protein>
<comment type="similarity">
    <text evidence="1">Belongs to the bacterial ribosomal protein bL28 family.</text>
</comment>
<keyword id="KW-0687">Ribonucleoprotein</keyword>
<keyword id="KW-0689">Ribosomal protein</keyword>
<dbReference type="EMBL" id="CP000805">
    <property type="protein sequence ID" value="ACD70788.1"/>
    <property type="molecule type" value="Genomic_DNA"/>
</dbReference>
<dbReference type="RefSeq" id="WP_010881810.1">
    <property type="nucleotide sequence ID" value="NC_021508.1"/>
</dbReference>
<dbReference type="SMR" id="B2S2V9"/>
<dbReference type="GeneID" id="93876798"/>
<dbReference type="KEGG" id="tpp:TPASS_0362"/>
<dbReference type="PATRIC" id="fig|455434.6.peg.364"/>
<dbReference type="Proteomes" id="UP000001202">
    <property type="component" value="Chromosome"/>
</dbReference>
<dbReference type="GO" id="GO:1990904">
    <property type="term" value="C:ribonucleoprotein complex"/>
    <property type="evidence" value="ECO:0007669"/>
    <property type="project" value="UniProtKB-KW"/>
</dbReference>
<dbReference type="GO" id="GO:0005840">
    <property type="term" value="C:ribosome"/>
    <property type="evidence" value="ECO:0007669"/>
    <property type="project" value="UniProtKB-KW"/>
</dbReference>
<dbReference type="GO" id="GO:0003735">
    <property type="term" value="F:structural constituent of ribosome"/>
    <property type="evidence" value="ECO:0007669"/>
    <property type="project" value="InterPro"/>
</dbReference>
<dbReference type="GO" id="GO:0006412">
    <property type="term" value="P:translation"/>
    <property type="evidence" value="ECO:0007669"/>
    <property type="project" value="UniProtKB-UniRule"/>
</dbReference>
<dbReference type="Gene3D" id="2.30.170.40">
    <property type="entry name" value="Ribosomal protein L28/L24"/>
    <property type="match status" value="1"/>
</dbReference>
<dbReference type="HAMAP" id="MF_00373">
    <property type="entry name" value="Ribosomal_bL28"/>
    <property type="match status" value="1"/>
</dbReference>
<dbReference type="InterPro" id="IPR050096">
    <property type="entry name" value="Bacterial_rp_bL28"/>
</dbReference>
<dbReference type="InterPro" id="IPR026569">
    <property type="entry name" value="Ribosomal_bL28"/>
</dbReference>
<dbReference type="InterPro" id="IPR034704">
    <property type="entry name" value="Ribosomal_bL28/bL31-like_sf"/>
</dbReference>
<dbReference type="InterPro" id="IPR001383">
    <property type="entry name" value="Ribosomal_bL28_bact-type"/>
</dbReference>
<dbReference type="InterPro" id="IPR037147">
    <property type="entry name" value="Ribosomal_bL28_sf"/>
</dbReference>
<dbReference type="NCBIfam" id="TIGR00009">
    <property type="entry name" value="L28"/>
    <property type="match status" value="1"/>
</dbReference>
<dbReference type="PANTHER" id="PTHR39080">
    <property type="entry name" value="50S RIBOSOMAL PROTEIN L28"/>
    <property type="match status" value="1"/>
</dbReference>
<dbReference type="PANTHER" id="PTHR39080:SF1">
    <property type="entry name" value="LARGE RIBOSOMAL SUBUNIT PROTEIN BL28A"/>
    <property type="match status" value="1"/>
</dbReference>
<dbReference type="Pfam" id="PF00830">
    <property type="entry name" value="Ribosomal_L28"/>
    <property type="match status" value="1"/>
</dbReference>
<dbReference type="SUPFAM" id="SSF143800">
    <property type="entry name" value="L28p-like"/>
    <property type="match status" value="1"/>
</dbReference>
<feature type="chain" id="PRO_1000121705" description="Large ribosomal subunit protein bL28">
    <location>
        <begin position="1"/>
        <end position="78"/>
    </location>
</feature>
<organism>
    <name type="scientific">Treponema pallidum subsp. pallidum (strain SS14)</name>
    <dbReference type="NCBI Taxonomy" id="455434"/>
    <lineage>
        <taxon>Bacteria</taxon>
        <taxon>Pseudomonadati</taxon>
        <taxon>Spirochaetota</taxon>
        <taxon>Spirochaetia</taxon>
        <taxon>Spirochaetales</taxon>
        <taxon>Treponemataceae</taxon>
        <taxon>Treponema</taxon>
    </lineage>
</organism>
<gene>
    <name evidence="1" type="primary">rpmB</name>
    <name type="ordered locus">TPASS_0362</name>
</gene>
<proteinExistence type="inferred from homology"/>
<sequence length="78" mass="8440">MARRCGLCGKGTISGCAVSKSMHHCKRVWKPNLLAVRVVVDGSALNMRICARCLRSNPLMKKAQPRANAPLRAAAPKL</sequence>
<accession>B2S2V9</accession>
<name>RL28_TREPS</name>